<comment type="function">
    <text evidence="6 7">Hydrolyzes the second messenger cGMP, which is a key regulator of many important physiological processes (PubMed:15673286). Has cAMP phosphodiesterase activity in vitro but not in vivo (PubMed:15673286). Has a role regulating cGMP transport in Malpighian tubule principal cells (PubMed:16232123).</text>
</comment>
<comment type="catalytic activity">
    <reaction evidence="6 7 8">
        <text>3',5'-cyclic GMP + H2O = GMP + H(+)</text>
        <dbReference type="Rhea" id="RHEA:16957"/>
        <dbReference type="ChEBI" id="CHEBI:15377"/>
        <dbReference type="ChEBI" id="CHEBI:15378"/>
        <dbReference type="ChEBI" id="CHEBI:57746"/>
        <dbReference type="ChEBI" id="CHEBI:58115"/>
        <dbReference type="EC" id="3.1.4.35"/>
    </reaction>
</comment>
<comment type="cofactor">
    <cofactor evidence="1">
        <name>a divalent metal cation</name>
        <dbReference type="ChEBI" id="CHEBI:60240"/>
    </cofactor>
    <text evidence="1">Binds 2 divalent metal cations per subunit. Site 1 may preferentially bind zinc ions, while site 2 has a preference for magnesium and/or manganese ions.</text>
</comment>
<comment type="activity regulation">
    <text evidence="6">Inhibited by sildenafil and zaprinast.</text>
</comment>
<comment type="biophysicochemical properties">
    <kinetics>
        <KM evidence="6">37 uM for cGMP</KM>
    </kinetics>
</comment>
<comment type="subunit">
    <text evidence="8">Interacts with PrBP.</text>
</comment>
<comment type="subcellular location">
    <subcellularLocation>
        <location evidence="7 8">Cell membrane</location>
        <topology evidence="7 8">Lipid-anchor</topology>
        <orientation evidence="7 8">Cytoplasmic side</orientation>
    </subcellularLocation>
    <text>Expressed on the apical side of the Malpighian tubule principal cell polarized membrane. Loss of prenylation causes protein location to the cytoplasm.</text>
</comment>
<comment type="tissue specificity">
    <text evidence="6 7">Expressed in Malpighian tubule principal cells (PubMed:15673286, PubMed:16232123). Also expressed in adult head (PubMed:15673286).</text>
</comment>
<comment type="disruption phenotype">
    <text evidence="7">Flies display increased active transport of cGMP. Overexpression of Pde6 confers inhibition of the active transport and efflux of cGMP by tubules.</text>
</comment>
<comment type="similarity">
    <text evidence="2">Belongs to the cyclic nucleotide phosphodiesterase family.</text>
</comment>
<comment type="sequence caution" evidence="10">
    <conflict type="erroneous initiation">
        <sequence resource="EMBL-CDS" id="AAL13699"/>
    </conflict>
    <text>Truncated N-terminus.</text>
</comment>
<accession>Q9VFI9</accession>
<accession>Q95TW8</accession>
<reference key="1">
    <citation type="journal article" date="2000" name="Science">
        <title>The genome sequence of Drosophila melanogaster.</title>
        <authorList>
            <person name="Adams M.D."/>
            <person name="Celniker S.E."/>
            <person name="Holt R.A."/>
            <person name="Evans C.A."/>
            <person name="Gocayne J.D."/>
            <person name="Amanatides P.G."/>
            <person name="Scherer S.E."/>
            <person name="Li P.W."/>
            <person name="Hoskins R.A."/>
            <person name="Galle R.F."/>
            <person name="George R.A."/>
            <person name="Lewis S.E."/>
            <person name="Richards S."/>
            <person name="Ashburner M."/>
            <person name="Henderson S.N."/>
            <person name="Sutton G.G."/>
            <person name="Wortman J.R."/>
            <person name="Yandell M.D."/>
            <person name="Zhang Q."/>
            <person name="Chen L.X."/>
            <person name="Brandon R.C."/>
            <person name="Rogers Y.-H.C."/>
            <person name="Blazej R.G."/>
            <person name="Champe M."/>
            <person name="Pfeiffer B.D."/>
            <person name="Wan K.H."/>
            <person name="Doyle C."/>
            <person name="Baxter E.G."/>
            <person name="Helt G."/>
            <person name="Nelson C.R."/>
            <person name="Miklos G.L.G."/>
            <person name="Abril J.F."/>
            <person name="Agbayani A."/>
            <person name="An H.-J."/>
            <person name="Andrews-Pfannkoch C."/>
            <person name="Baldwin D."/>
            <person name="Ballew R.M."/>
            <person name="Basu A."/>
            <person name="Baxendale J."/>
            <person name="Bayraktaroglu L."/>
            <person name="Beasley E.M."/>
            <person name="Beeson K.Y."/>
            <person name="Benos P.V."/>
            <person name="Berman B.P."/>
            <person name="Bhandari D."/>
            <person name="Bolshakov S."/>
            <person name="Borkova D."/>
            <person name="Botchan M.R."/>
            <person name="Bouck J."/>
            <person name="Brokstein P."/>
            <person name="Brottier P."/>
            <person name="Burtis K.C."/>
            <person name="Busam D.A."/>
            <person name="Butler H."/>
            <person name="Cadieu E."/>
            <person name="Center A."/>
            <person name="Chandra I."/>
            <person name="Cherry J.M."/>
            <person name="Cawley S."/>
            <person name="Dahlke C."/>
            <person name="Davenport L.B."/>
            <person name="Davies P."/>
            <person name="de Pablos B."/>
            <person name="Delcher A."/>
            <person name="Deng Z."/>
            <person name="Mays A.D."/>
            <person name="Dew I."/>
            <person name="Dietz S.M."/>
            <person name="Dodson K."/>
            <person name="Doup L.E."/>
            <person name="Downes M."/>
            <person name="Dugan-Rocha S."/>
            <person name="Dunkov B.C."/>
            <person name="Dunn P."/>
            <person name="Durbin K.J."/>
            <person name="Evangelista C.C."/>
            <person name="Ferraz C."/>
            <person name="Ferriera S."/>
            <person name="Fleischmann W."/>
            <person name="Fosler C."/>
            <person name="Gabrielian A.E."/>
            <person name="Garg N.S."/>
            <person name="Gelbart W.M."/>
            <person name="Glasser K."/>
            <person name="Glodek A."/>
            <person name="Gong F."/>
            <person name="Gorrell J.H."/>
            <person name="Gu Z."/>
            <person name="Guan P."/>
            <person name="Harris M."/>
            <person name="Harris N.L."/>
            <person name="Harvey D.A."/>
            <person name="Heiman T.J."/>
            <person name="Hernandez J.R."/>
            <person name="Houck J."/>
            <person name="Hostin D."/>
            <person name="Houston K.A."/>
            <person name="Howland T.J."/>
            <person name="Wei M.-H."/>
            <person name="Ibegwam C."/>
            <person name="Jalali M."/>
            <person name="Kalush F."/>
            <person name="Karpen G.H."/>
            <person name="Ke Z."/>
            <person name="Kennison J.A."/>
            <person name="Ketchum K.A."/>
            <person name="Kimmel B.E."/>
            <person name="Kodira C.D."/>
            <person name="Kraft C.L."/>
            <person name="Kravitz S."/>
            <person name="Kulp D."/>
            <person name="Lai Z."/>
            <person name="Lasko P."/>
            <person name="Lei Y."/>
            <person name="Levitsky A.A."/>
            <person name="Li J.H."/>
            <person name="Li Z."/>
            <person name="Liang Y."/>
            <person name="Lin X."/>
            <person name="Liu X."/>
            <person name="Mattei B."/>
            <person name="McIntosh T.C."/>
            <person name="McLeod M.P."/>
            <person name="McPherson D."/>
            <person name="Merkulov G."/>
            <person name="Milshina N.V."/>
            <person name="Mobarry C."/>
            <person name="Morris J."/>
            <person name="Moshrefi A."/>
            <person name="Mount S.M."/>
            <person name="Moy M."/>
            <person name="Murphy B."/>
            <person name="Murphy L."/>
            <person name="Muzny D.M."/>
            <person name="Nelson D.L."/>
            <person name="Nelson D.R."/>
            <person name="Nelson K.A."/>
            <person name="Nixon K."/>
            <person name="Nusskern D.R."/>
            <person name="Pacleb J.M."/>
            <person name="Palazzolo M."/>
            <person name="Pittman G.S."/>
            <person name="Pan S."/>
            <person name="Pollard J."/>
            <person name="Puri V."/>
            <person name="Reese M.G."/>
            <person name="Reinert K."/>
            <person name="Remington K."/>
            <person name="Saunders R.D.C."/>
            <person name="Scheeler F."/>
            <person name="Shen H."/>
            <person name="Shue B.C."/>
            <person name="Siden-Kiamos I."/>
            <person name="Simpson M."/>
            <person name="Skupski M.P."/>
            <person name="Smith T.J."/>
            <person name="Spier E."/>
            <person name="Spradling A.C."/>
            <person name="Stapleton M."/>
            <person name="Strong R."/>
            <person name="Sun E."/>
            <person name="Svirskas R."/>
            <person name="Tector C."/>
            <person name="Turner R."/>
            <person name="Venter E."/>
            <person name="Wang A.H."/>
            <person name="Wang X."/>
            <person name="Wang Z.-Y."/>
            <person name="Wassarman D.A."/>
            <person name="Weinstock G.M."/>
            <person name="Weissenbach J."/>
            <person name="Williams S.M."/>
            <person name="Woodage T."/>
            <person name="Worley K.C."/>
            <person name="Wu D."/>
            <person name="Yang S."/>
            <person name="Yao Q.A."/>
            <person name="Ye J."/>
            <person name="Yeh R.-F."/>
            <person name="Zaveri J.S."/>
            <person name="Zhan M."/>
            <person name="Zhang G."/>
            <person name="Zhao Q."/>
            <person name="Zheng L."/>
            <person name="Zheng X.H."/>
            <person name="Zhong F.N."/>
            <person name="Zhong W."/>
            <person name="Zhou X."/>
            <person name="Zhu S.C."/>
            <person name="Zhu X."/>
            <person name="Smith H.O."/>
            <person name="Gibbs R.A."/>
            <person name="Myers E.W."/>
            <person name="Rubin G.M."/>
            <person name="Venter J.C."/>
        </authorList>
    </citation>
    <scope>NUCLEOTIDE SEQUENCE [LARGE SCALE GENOMIC DNA]</scope>
    <source>
        <strain>Berkeley</strain>
    </source>
</reference>
<reference evidence="10" key="2">
    <citation type="journal article" date="2002" name="Genome Biol.">
        <title>Annotation of the Drosophila melanogaster euchromatic genome: a systematic review.</title>
        <authorList>
            <person name="Misra S."/>
            <person name="Crosby M.A."/>
            <person name="Mungall C.J."/>
            <person name="Matthews B.B."/>
            <person name="Campbell K.S."/>
            <person name="Hradecky P."/>
            <person name="Huang Y."/>
            <person name="Kaminker J.S."/>
            <person name="Millburn G.H."/>
            <person name="Prochnik S.E."/>
            <person name="Smith C.D."/>
            <person name="Tupy J.L."/>
            <person name="Whitfield E.J."/>
            <person name="Bayraktaroglu L."/>
            <person name="Berman B.P."/>
            <person name="Bettencourt B.R."/>
            <person name="Celniker S.E."/>
            <person name="de Grey A.D.N.J."/>
            <person name="Drysdale R.A."/>
            <person name="Harris N.L."/>
            <person name="Richter J."/>
            <person name="Russo S."/>
            <person name="Schroeder A.J."/>
            <person name="Shu S.Q."/>
            <person name="Stapleton M."/>
            <person name="Yamada C."/>
            <person name="Ashburner M."/>
            <person name="Gelbart W.M."/>
            <person name="Rubin G.M."/>
            <person name="Lewis S.E."/>
        </authorList>
    </citation>
    <scope>GENOME REANNOTATION</scope>
    <source>
        <strain>Berkeley</strain>
    </source>
</reference>
<reference evidence="10 11" key="3">
    <citation type="journal article" date="2002" name="Genome Biol.">
        <title>A Drosophila full-length cDNA resource.</title>
        <authorList>
            <person name="Stapleton M."/>
            <person name="Carlson J.W."/>
            <person name="Brokstein P."/>
            <person name="Yu C."/>
            <person name="Champe M."/>
            <person name="George R.A."/>
            <person name="Guarin H."/>
            <person name="Kronmiller B."/>
            <person name="Pacleb J.M."/>
            <person name="Park S."/>
            <person name="Wan K.H."/>
            <person name="Rubin G.M."/>
            <person name="Celniker S.E."/>
        </authorList>
    </citation>
    <scope>NUCLEOTIDE SEQUENCE [LARGE SCALE MRNA] OF 84-1118</scope>
    <source>
        <strain evidence="11">Berkeley</strain>
        <tissue evidence="5">Head</tissue>
    </source>
</reference>
<reference key="4">
    <citation type="journal article" date="2005" name="Biochem. J.">
        <title>Cyclic nucleotide phosphodiesterases in Drosophila melanogaster.</title>
        <authorList>
            <person name="Day J.P."/>
            <person name="Dow J.A.T."/>
            <person name="Houslay M.D."/>
            <person name="Davies S.A."/>
        </authorList>
    </citation>
    <scope>FUNCTION</scope>
    <scope>CATALYTIC ACTIVITY</scope>
    <scope>ACTIVITY REGULATION</scope>
    <scope>BIOPHYSICOCHEMICAL PROPERTIES</scope>
    <scope>TISSUE SPECIFICITY</scope>
</reference>
<reference key="5">
    <citation type="journal article" date="2006" name="Biochem. J.">
        <title>A novel role for a Drosophila homologue of cGMP-specific phosphodiesterase in the active transport of cGMP.</title>
        <authorList>
            <person name="Day J.P."/>
            <person name="Houslay M.D."/>
            <person name="Davies S.-A."/>
        </authorList>
    </citation>
    <scope>FUNCTION</scope>
    <scope>CATALYTIC ACTIVITY</scope>
    <scope>SUBCELLULAR LOCATION</scope>
    <scope>DISRUPTION PHENOTYPE</scope>
    <scope>TISSUE SPECIFICITY</scope>
</reference>
<reference key="6">
    <citation type="journal article" date="2008" name="Biochem. J.">
        <title>Regulation of a Drosophila melanogaster cGMP-specific phosphodiesterase by prenylation and interaction with a prenyl-binding protein.</title>
        <authorList>
            <person name="Day J.P."/>
            <person name="Cleghon V."/>
            <person name="Houslay M.D."/>
            <person name="Davies S.-A."/>
        </authorList>
    </citation>
    <scope>CATALYTIC ACTIVITY</scope>
    <scope>INTERACTION WITH PRBP</scope>
    <scope>SUBCELLULAR LOCATION</scope>
    <scope>ISOPRENYLATION AT CYS-1115</scope>
    <scope>MUTAGENESIS OF CYS-1115</scope>
</reference>
<dbReference type="EC" id="3.1.4.35" evidence="6 7 8"/>
<dbReference type="EMBL" id="AE014297">
    <property type="protein sequence ID" value="AAF55066.4"/>
    <property type="molecule type" value="Genomic_DNA"/>
</dbReference>
<dbReference type="EMBL" id="AY058470">
    <property type="protein sequence ID" value="AAL13699.1"/>
    <property type="status" value="ALT_INIT"/>
    <property type="molecule type" value="mRNA"/>
</dbReference>
<dbReference type="RefSeq" id="NP_001287327.1">
    <property type="nucleotide sequence ID" value="NM_001300398.1"/>
</dbReference>
<dbReference type="RefSeq" id="NP_650369.3">
    <property type="nucleotide sequence ID" value="NM_142112.5"/>
</dbReference>
<dbReference type="SMR" id="Q9VFI9"/>
<dbReference type="BioGRID" id="66835">
    <property type="interactions" value="1"/>
</dbReference>
<dbReference type="FunCoup" id="Q9VFI9">
    <property type="interactions" value="215"/>
</dbReference>
<dbReference type="STRING" id="7227.FBpp0303081"/>
<dbReference type="GlyGen" id="Q9VFI9">
    <property type="glycosylation" value="1 site"/>
</dbReference>
<dbReference type="PaxDb" id="7227-FBpp0289559"/>
<dbReference type="EnsemblMetazoa" id="FBtr0300330">
    <property type="protein sequence ID" value="FBpp0289559"/>
    <property type="gene ID" value="FBgn0038237"/>
</dbReference>
<dbReference type="EnsemblMetazoa" id="FBtr0345168">
    <property type="protein sequence ID" value="FBpp0311378"/>
    <property type="gene ID" value="FBgn0038237"/>
</dbReference>
<dbReference type="GeneID" id="41760"/>
<dbReference type="KEGG" id="dme:Dmel_CG8279"/>
<dbReference type="AGR" id="FB:FBgn0038237"/>
<dbReference type="CTD" id="41760"/>
<dbReference type="FlyBase" id="FBgn0038237">
    <property type="gene designation" value="Pde6"/>
</dbReference>
<dbReference type="VEuPathDB" id="VectorBase:FBgn0038237"/>
<dbReference type="eggNOG" id="KOG3689">
    <property type="taxonomic scope" value="Eukaryota"/>
</dbReference>
<dbReference type="HOGENOM" id="CLU_006980_0_2_1"/>
<dbReference type="InParanoid" id="Q9VFI9"/>
<dbReference type="OMA" id="FHIPYEV"/>
<dbReference type="OrthoDB" id="74705at2759"/>
<dbReference type="BioGRID-ORCS" id="41760">
    <property type="hits" value="0 hits in 3 CRISPR screens"/>
</dbReference>
<dbReference type="ChiTaRS" id="Pde6">
    <property type="organism name" value="fly"/>
</dbReference>
<dbReference type="GenomeRNAi" id="41760"/>
<dbReference type="PRO" id="PR:Q9VFI9"/>
<dbReference type="Proteomes" id="UP000000803">
    <property type="component" value="Chromosome 3R"/>
</dbReference>
<dbReference type="Bgee" id="FBgn0038237">
    <property type="expression patterns" value="Expressed in adult olfactory receptor neuron Or47b (Drosophila) in antenna and 256 other cell types or tissues"/>
</dbReference>
<dbReference type="ExpressionAtlas" id="Q9VFI9">
    <property type="expression patterns" value="baseline and differential"/>
</dbReference>
<dbReference type="GO" id="GO:0016324">
    <property type="term" value="C:apical plasma membrane"/>
    <property type="evidence" value="ECO:0000314"/>
    <property type="project" value="FlyBase"/>
</dbReference>
<dbReference type="GO" id="GO:0016020">
    <property type="term" value="C:membrane"/>
    <property type="evidence" value="ECO:0000314"/>
    <property type="project" value="UniProtKB"/>
</dbReference>
<dbReference type="GO" id="GO:0005886">
    <property type="term" value="C:plasma membrane"/>
    <property type="evidence" value="ECO:0000314"/>
    <property type="project" value="FlyBase"/>
</dbReference>
<dbReference type="GO" id="GO:0004115">
    <property type="term" value="F:3',5'-cyclic-AMP phosphodiesterase activity"/>
    <property type="evidence" value="ECO:0000318"/>
    <property type="project" value="GO_Central"/>
</dbReference>
<dbReference type="GO" id="GO:0047555">
    <property type="term" value="F:3',5'-cyclic-GMP phosphodiesterase activity"/>
    <property type="evidence" value="ECO:0000314"/>
    <property type="project" value="UniProtKB"/>
</dbReference>
<dbReference type="GO" id="GO:0046872">
    <property type="term" value="F:metal ion binding"/>
    <property type="evidence" value="ECO:0007669"/>
    <property type="project" value="UniProtKB-KW"/>
</dbReference>
<dbReference type="GO" id="GO:0019933">
    <property type="term" value="P:cAMP-mediated signaling"/>
    <property type="evidence" value="ECO:0000318"/>
    <property type="project" value="GO_Central"/>
</dbReference>
<dbReference type="GO" id="GO:0046068">
    <property type="term" value="P:cGMP metabolic process"/>
    <property type="evidence" value="ECO:0000314"/>
    <property type="project" value="UniProtKB"/>
</dbReference>
<dbReference type="GO" id="GO:0032240">
    <property type="term" value="P:negative regulation of nucleobase-containing compound transport"/>
    <property type="evidence" value="ECO:0000315"/>
    <property type="project" value="FlyBase"/>
</dbReference>
<dbReference type="CDD" id="cd00077">
    <property type="entry name" value="HDc"/>
    <property type="match status" value="1"/>
</dbReference>
<dbReference type="FunFam" id="1.10.1300.10:FF:000003">
    <property type="entry name" value="Phosphodiesterase"/>
    <property type="match status" value="1"/>
</dbReference>
<dbReference type="FunFam" id="3.30.450.40:FF:000031">
    <property type="entry name" value="Phosphodiesterase"/>
    <property type="match status" value="1"/>
</dbReference>
<dbReference type="Gene3D" id="3.30.450.40">
    <property type="match status" value="2"/>
</dbReference>
<dbReference type="Gene3D" id="1.10.1300.10">
    <property type="entry name" value="3'5'-cyclic nucleotide phosphodiesterase, catalytic domain"/>
    <property type="match status" value="1"/>
</dbReference>
<dbReference type="InterPro" id="IPR003018">
    <property type="entry name" value="GAF"/>
</dbReference>
<dbReference type="InterPro" id="IPR029016">
    <property type="entry name" value="GAF-like_dom_sf"/>
</dbReference>
<dbReference type="InterPro" id="IPR003607">
    <property type="entry name" value="HD/PDEase_dom"/>
</dbReference>
<dbReference type="InterPro" id="IPR023088">
    <property type="entry name" value="PDEase"/>
</dbReference>
<dbReference type="InterPro" id="IPR002073">
    <property type="entry name" value="PDEase_catalytic_dom"/>
</dbReference>
<dbReference type="InterPro" id="IPR036971">
    <property type="entry name" value="PDEase_catalytic_dom_sf"/>
</dbReference>
<dbReference type="InterPro" id="IPR023174">
    <property type="entry name" value="PDEase_CS"/>
</dbReference>
<dbReference type="PANTHER" id="PTHR11347">
    <property type="entry name" value="CYCLIC NUCLEOTIDE PHOSPHODIESTERASE"/>
    <property type="match status" value="1"/>
</dbReference>
<dbReference type="Pfam" id="PF01590">
    <property type="entry name" value="GAF"/>
    <property type="match status" value="2"/>
</dbReference>
<dbReference type="Pfam" id="PF00233">
    <property type="entry name" value="PDEase_I"/>
    <property type="match status" value="1"/>
</dbReference>
<dbReference type="PRINTS" id="PR00387">
    <property type="entry name" value="PDIESTERASE1"/>
</dbReference>
<dbReference type="SMART" id="SM00065">
    <property type="entry name" value="GAF"/>
    <property type="match status" value="2"/>
</dbReference>
<dbReference type="SMART" id="SM00471">
    <property type="entry name" value="HDc"/>
    <property type="match status" value="1"/>
</dbReference>
<dbReference type="SUPFAM" id="SSF55781">
    <property type="entry name" value="GAF domain-like"/>
    <property type="match status" value="2"/>
</dbReference>
<dbReference type="SUPFAM" id="SSF109604">
    <property type="entry name" value="HD-domain/PDEase-like"/>
    <property type="match status" value="1"/>
</dbReference>
<dbReference type="PROSITE" id="PS00126">
    <property type="entry name" value="PDEASE_I_1"/>
    <property type="match status" value="1"/>
</dbReference>
<dbReference type="PROSITE" id="PS51845">
    <property type="entry name" value="PDEASE_I_2"/>
    <property type="match status" value="1"/>
</dbReference>
<evidence type="ECO:0000250" key="1"/>
<evidence type="ECO:0000255" key="2"/>
<evidence type="ECO:0000255" key="3">
    <source>
        <dbReference type="PROSITE-ProRule" id="PRU01192"/>
    </source>
</evidence>
<evidence type="ECO:0000256" key="4">
    <source>
        <dbReference type="SAM" id="MobiDB-lite"/>
    </source>
</evidence>
<evidence type="ECO:0000269" key="5">
    <source>
    </source>
</evidence>
<evidence type="ECO:0000269" key="6">
    <source>
    </source>
</evidence>
<evidence type="ECO:0000269" key="7">
    <source>
    </source>
</evidence>
<evidence type="ECO:0000269" key="8">
    <source>
    </source>
</evidence>
<evidence type="ECO:0000303" key="9">
    <source>
    </source>
</evidence>
<evidence type="ECO:0000305" key="10"/>
<evidence type="ECO:0000312" key="11">
    <source>
        <dbReference type="EMBL" id="AAL13699.1"/>
    </source>
</evidence>
<gene>
    <name type="primary">Pde6</name>
    <name type="ORF">CG8279</name>
</gene>
<feature type="chain" id="PRO_0000356892" description="cGMP-specific 3',5'-cyclic phosphodiesterase">
    <location>
        <begin position="1"/>
        <end position="1115"/>
    </location>
</feature>
<feature type="propeptide" id="PRO_0000356893" description="Removed in mature form" evidence="10">
    <location>
        <begin position="1116"/>
        <end position="1118"/>
    </location>
</feature>
<feature type="domain" description="GAF 1">
    <location>
        <begin position="247"/>
        <end position="399"/>
    </location>
</feature>
<feature type="domain" description="GAF 2">
    <location>
        <begin position="431"/>
        <end position="612"/>
    </location>
</feature>
<feature type="domain" description="PDEase" evidence="3">
    <location>
        <begin position="642"/>
        <end position="965"/>
    </location>
</feature>
<feature type="region of interest" description="Disordered" evidence="4">
    <location>
        <begin position="1"/>
        <end position="142"/>
    </location>
</feature>
<feature type="region of interest" description="Disordered" evidence="4">
    <location>
        <begin position="1006"/>
        <end position="1035"/>
    </location>
</feature>
<feature type="region of interest" description="Disordered" evidence="4">
    <location>
        <begin position="1065"/>
        <end position="1118"/>
    </location>
</feature>
<feature type="compositionally biased region" description="Low complexity" evidence="4">
    <location>
        <begin position="18"/>
        <end position="33"/>
    </location>
</feature>
<feature type="compositionally biased region" description="Polar residues" evidence="4">
    <location>
        <begin position="34"/>
        <end position="45"/>
    </location>
</feature>
<feature type="compositionally biased region" description="Low complexity" evidence="4">
    <location>
        <begin position="46"/>
        <end position="56"/>
    </location>
</feature>
<feature type="compositionally biased region" description="Low complexity" evidence="4">
    <location>
        <begin position="63"/>
        <end position="72"/>
    </location>
</feature>
<feature type="compositionally biased region" description="Polar residues" evidence="4">
    <location>
        <begin position="84"/>
        <end position="101"/>
    </location>
</feature>
<feature type="compositionally biased region" description="Low complexity" evidence="4">
    <location>
        <begin position="102"/>
        <end position="128"/>
    </location>
</feature>
<feature type="compositionally biased region" description="Basic and acidic residues" evidence="4">
    <location>
        <begin position="1011"/>
        <end position="1022"/>
    </location>
</feature>
<feature type="compositionally biased region" description="Basic and acidic residues" evidence="4">
    <location>
        <begin position="1065"/>
        <end position="1075"/>
    </location>
</feature>
<feature type="compositionally biased region" description="Low complexity" evidence="4">
    <location>
        <begin position="1084"/>
        <end position="1104"/>
    </location>
</feature>
<feature type="compositionally biased region" description="Basic residues" evidence="4">
    <location>
        <begin position="1108"/>
        <end position="1118"/>
    </location>
</feature>
<feature type="active site" description="Proton donor" evidence="1">
    <location>
        <position position="718"/>
    </location>
</feature>
<feature type="binding site" evidence="1">
    <location>
        <position position="722"/>
    </location>
    <ligand>
        <name>a divalent metal cation</name>
        <dbReference type="ChEBI" id="CHEBI:60240"/>
        <label>1</label>
    </ligand>
</feature>
<feature type="binding site" evidence="1">
    <location>
        <position position="758"/>
    </location>
    <ligand>
        <name>a divalent metal cation</name>
        <dbReference type="ChEBI" id="CHEBI:60240"/>
        <label>1</label>
    </ligand>
</feature>
<feature type="binding site" evidence="1">
    <location>
        <position position="759"/>
    </location>
    <ligand>
        <name>a divalent metal cation</name>
        <dbReference type="ChEBI" id="CHEBI:60240"/>
        <label>1</label>
    </ligand>
</feature>
<feature type="binding site" evidence="1">
    <location>
        <position position="759"/>
    </location>
    <ligand>
        <name>a divalent metal cation</name>
        <dbReference type="ChEBI" id="CHEBI:60240"/>
        <label>2</label>
    </ligand>
</feature>
<feature type="binding site" evidence="1">
    <location>
        <position position="869"/>
    </location>
    <ligand>
        <name>a divalent metal cation</name>
        <dbReference type="ChEBI" id="CHEBI:60240"/>
        <label>1</label>
    </ligand>
</feature>
<feature type="modified residue" description="Cysteine methyl ester" evidence="10">
    <location>
        <position position="1115"/>
    </location>
</feature>
<feature type="lipid moiety-binding region" description="S-farnesyl cysteine" evidence="8">
    <location>
        <position position="1115"/>
    </location>
</feature>
<feature type="mutagenesis site" description="Impairs prenylation and membrane." evidence="8">
    <original>C</original>
    <variation>S</variation>
    <location>
        <position position="1115"/>
    </location>
</feature>
<keyword id="KW-1003">Cell membrane</keyword>
<keyword id="KW-0140">cGMP</keyword>
<keyword id="KW-0378">Hydrolase</keyword>
<keyword id="KW-0449">Lipoprotein</keyword>
<keyword id="KW-0472">Membrane</keyword>
<keyword id="KW-0479">Metal-binding</keyword>
<keyword id="KW-0488">Methylation</keyword>
<keyword id="KW-0636">Prenylation</keyword>
<keyword id="KW-1185">Reference proteome</keyword>
<keyword id="KW-0677">Repeat</keyword>
<proteinExistence type="evidence at protein level"/>
<name>PDE6_DROME</name>
<protein>
    <recommendedName>
        <fullName evidence="9">cGMP-specific 3',5'-cyclic phosphodiesterase</fullName>
        <ecNumber evidence="6 7 8">3.1.4.35</ecNumber>
    </recommendedName>
    <alternativeName>
        <fullName>DmPDE5/6</fullName>
        <shortName evidence="9">DmPDE6</shortName>
    </alternativeName>
</protein>
<organism>
    <name type="scientific">Drosophila melanogaster</name>
    <name type="common">Fruit fly</name>
    <dbReference type="NCBI Taxonomy" id="7227"/>
    <lineage>
        <taxon>Eukaryota</taxon>
        <taxon>Metazoa</taxon>
        <taxon>Ecdysozoa</taxon>
        <taxon>Arthropoda</taxon>
        <taxon>Hexapoda</taxon>
        <taxon>Insecta</taxon>
        <taxon>Pterygota</taxon>
        <taxon>Neoptera</taxon>
        <taxon>Endopterygota</taxon>
        <taxon>Diptera</taxon>
        <taxon>Brachycera</taxon>
        <taxon>Muscomorpha</taxon>
        <taxon>Ephydroidea</taxon>
        <taxon>Drosophilidae</taxon>
        <taxon>Drosophila</taxon>
        <taxon>Sophophora</taxon>
    </lineage>
</organism>
<sequence length="1118" mass="124325">MTDVSSPAGGAASPVEMSTTSSSSAATTSASSSKPLTNGANKTAISTAAGGVTPGAVPGPGSGAIPASSSSGNQVKLEHHHRQSNNNRPAVTNRSSETKLMTPTGSSSSPSQSPSQTQASIQTQTSQQDRLAKASTTASQQDVDEVARLFEEKPEAFEKWLTERAPPEALSRLQEFIENRKPHKRPSVTSDLFQQWMAASPTVQQKSPRSLSNSSASSLPECRRHLMDLDEGELFMELIRDVANELDIDVLCHKILVNVGLLTHADRGSLFLAKGTPTNKYLVAKLFDVTQKTALKDAVTRASAEEIIIPFGIGIAGMVAQTKQMINIKEAYKDARFNCEIDLKTGYKTNAILCMPICNYEGDIIGVAQIINKTNGCMEFDEHDVEIFRRYLTFCGIGIQNAQLFEMSVQEYRRNQILLNLARSIFEEQNNLECLVTKIMTEARELLKCERCSVFLVDLDCCEASHLEKIIEKPNQPATRAIKSADSFEEKKMRNRFTVLFELGGEYQAANVSRPSVSELSSSTLAQIAQFVATTGQTVNICDVIEWVRDHNQIRAEDEIDSTQAILCMPIMNAQKKVIGVAQLINKANGVPFTDSDASIFEAFAIFCGLGIHNTQMYENACKLMAKQKVALECLSYHATASQDQTEKLTQDVIAEAESYNLYSFTFTDFELVDDDTCRAVLRMFMQCNLVSQFQIPYDVLCRWVLSVRKNYRPVKYHNWRHALNVAQTMFAMLKTGKMERFMTDLEILGLLVACLCHDLDHRGTNNAFQTKTESPLAILYTTSTMEHHHFDQCVMILNSEGNNIFQALSPEDYRSVMKTVESAILSTDLAMYFKKRNAFLELVENGEFDWQGEEKKDLLCGMMMTACDVSAIAKPWEVQHKVAKLVADEFFDQGDLEKLQLNTQPVAMMDRERKDELPKMQVGFIDVICLPLYRVLCDTFPWITPLYEGTLENRRNWQDLAEKVEMGLTWIDHDTIDKPVEEFAACADEEIKDIEFTVTTLNCNQQSQHGSEDSHTPEHQRSGSRLSMKKTGALGKAVRSKLSKTLYNSMDGSKPKTSLKLLESHVSEDMDDKSPTSPSQPQASGSMGRMSASSSTSSAGGQMVDKSKKRSKLCALL</sequence>